<comment type="function">
    <text evidence="1">Acts as a co-chaperone with HSPA8/Hsc70; required to promote protein folding and trafficking, prevent aggregation of client proteins, and promote unfolded proteins to endoplasmic reticulum-associated degradation (ERAD) pathway. Acts by determining HSPA8/Hsc70's ATPase and polypeptide-binding activities. Can also act independently of HSPA8/Hsc70: together with DNAJB14, acts as a chaperone that promotes maturation of potassium channels KCND2 and KCNH2 by stabilizing nascent channel subunits and assembling them into tetramers. While stabilization of nascent channel proteins is dependent on HSPA8/Hsc70, the process of oligomerization of channel subunits is independent of HSPA8/Hsc70. When overexpressed, forms membranous structures together with DNAJB14 and HSPA8/Hsc70 within the nucleus; the role of these structures, named DJANGOs, is still unclear.</text>
</comment>
<comment type="subunit">
    <text evidence="1">Homodimer and homotetramer. Interacts (via J domain) with HSPA8/Hsc70. Forms a multiprotein complex, at least composed of DNAJB12, DNAJB14, HSPA8/Hsc70 and SGTA; interaction with DNAJB14 and HSPA8/Hsc70 is direct.</text>
</comment>
<comment type="subcellular location">
    <subcellularLocation>
        <location evidence="1">Endoplasmic reticulum membrane</location>
        <topology evidence="2">Single-pass membrane protein</topology>
    </subcellularLocation>
    <subcellularLocation>
        <location evidence="1">Nucleus membrane</location>
        <topology evidence="1">Single-pass membrane protein</topology>
    </subcellularLocation>
    <text evidence="1">Localizes to the endoplasmic reticulum membrane. When overexpressed, forms membranous structures in the nucleus.</text>
</comment>
<comment type="PTM">
    <text evidence="1">Methylated at His-186 by METTL9.</text>
</comment>
<comment type="similarity">
    <text evidence="6">Belongs to the DnaJ family. DNAJB12/DNAJB14 subfamily.</text>
</comment>
<keyword id="KW-0007">Acetylation</keyword>
<keyword id="KW-0143">Chaperone</keyword>
<keyword id="KW-0256">Endoplasmic reticulum</keyword>
<keyword id="KW-0472">Membrane</keyword>
<keyword id="KW-0488">Methylation</keyword>
<keyword id="KW-0539">Nucleus</keyword>
<keyword id="KW-1185">Reference proteome</keyword>
<keyword id="KW-0812">Transmembrane</keyword>
<keyword id="KW-1133">Transmembrane helix</keyword>
<protein>
    <recommendedName>
        <fullName evidence="7">DnaJ homolog subfamily B member 12</fullName>
    </recommendedName>
    <alternativeName>
        <fullName evidence="5">mDj10</fullName>
    </alternativeName>
</protein>
<reference key="1">
    <citation type="journal article" date="2000" name="Cell Stress Chaperones">
        <title>Mammalian HSP40/DNAJ homologs: cloning of novel cDNAs and a proposal for their classification and nomenclature.</title>
        <authorList>
            <person name="Ohtsuka K."/>
            <person name="Hata M."/>
        </authorList>
    </citation>
    <scope>NUCLEOTIDE SEQUENCE [MRNA]</scope>
</reference>
<reference key="2">
    <citation type="journal article" date="2005" name="Science">
        <title>The transcriptional landscape of the mammalian genome.</title>
        <authorList>
            <person name="Carninci P."/>
            <person name="Kasukawa T."/>
            <person name="Katayama S."/>
            <person name="Gough J."/>
            <person name="Frith M.C."/>
            <person name="Maeda N."/>
            <person name="Oyama R."/>
            <person name="Ravasi T."/>
            <person name="Lenhard B."/>
            <person name="Wells C."/>
            <person name="Kodzius R."/>
            <person name="Shimokawa K."/>
            <person name="Bajic V.B."/>
            <person name="Brenner S.E."/>
            <person name="Batalov S."/>
            <person name="Forrest A.R."/>
            <person name="Zavolan M."/>
            <person name="Davis M.J."/>
            <person name="Wilming L.G."/>
            <person name="Aidinis V."/>
            <person name="Allen J.E."/>
            <person name="Ambesi-Impiombato A."/>
            <person name="Apweiler R."/>
            <person name="Aturaliya R.N."/>
            <person name="Bailey T.L."/>
            <person name="Bansal M."/>
            <person name="Baxter L."/>
            <person name="Beisel K.W."/>
            <person name="Bersano T."/>
            <person name="Bono H."/>
            <person name="Chalk A.M."/>
            <person name="Chiu K.P."/>
            <person name="Choudhary V."/>
            <person name="Christoffels A."/>
            <person name="Clutterbuck D.R."/>
            <person name="Crowe M.L."/>
            <person name="Dalla E."/>
            <person name="Dalrymple B.P."/>
            <person name="de Bono B."/>
            <person name="Della Gatta G."/>
            <person name="di Bernardo D."/>
            <person name="Down T."/>
            <person name="Engstrom P."/>
            <person name="Fagiolini M."/>
            <person name="Faulkner G."/>
            <person name="Fletcher C.F."/>
            <person name="Fukushima T."/>
            <person name="Furuno M."/>
            <person name="Futaki S."/>
            <person name="Gariboldi M."/>
            <person name="Georgii-Hemming P."/>
            <person name="Gingeras T.R."/>
            <person name="Gojobori T."/>
            <person name="Green R.E."/>
            <person name="Gustincich S."/>
            <person name="Harbers M."/>
            <person name="Hayashi Y."/>
            <person name="Hensch T.K."/>
            <person name="Hirokawa N."/>
            <person name="Hill D."/>
            <person name="Huminiecki L."/>
            <person name="Iacono M."/>
            <person name="Ikeo K."/>
            <person name="Iwama A."/>
            <person name="Ishikawa T."/>
            <person name="Jakt M."/>
            <person name="Kanapin A."/>
            <person name="Katoh M."/>
            <person name="Kawasawa Y."/>
            <person name="Kelso J."/>
            <person name="Kitamura H."/>
            <person name="Kitano H."/>
            <person name="Kollias G."/>
            <person name="Krishnan S.P."/>
            <person name="Kruger A."/>
            <person name="Kummerfeld S.K."/>
            <person name="Kurochkin I.V."/>
            <person name="Lareau L.F."/>
            <person name="Lazarevic D."/>
            <person name="Lipovich L."/>
            <person name="Liu J."/>
            <person name="Liuni S."/>
            <person name="McWilliam S."/>
            <person name="Madan Babu M."/>
            <person name="Madera M."/>
            <person name="Marchionni L."/>
            <person name="Matsuda H."/>
            <person name="Matsuzawa S."/>
            <person name="Miki H."/>
            <person name="Mignone F."/>
            <person name="Miyake S."/>
            <person name="Morris K."/>
            <person name="Mottagui-Tabar S."/>
            <person name="Mulder N."/>
            <person name="Nakano N."/>
            <person name="Nakauchi H."/>
            <person name="Ng P."/>
            <person name="Nilsson R."/>
            <person name="Nishiguchi S."/>
            <person name="Nishikawa S."/>
            <person name="Nori F."/>
            <person name="Ohara O."/>
            <person name="Okazaki Y."/>
            <person name="Orlando V."/>
            <person name="Pang K.C."/>
            <person name="Pavan W.J."/>
            <person name="Pavesi G."/>
            <person name="Pesole G."/>
            <person name="Petrovsky N."/>
            <person name="Piazza S."/>
            <person name="Reed J."/>
            <person name="Reid J.F."/>
            <person name="Ring B.Z."/>
            <person name="Ringwald M."/>
            <person name="Rost B."/>
            <person name="Ruan Y."/>
            <person name="Salzberg S.L."/>
            <person name="Sandelin A."/>
            <person name="Schneider C."/>
            <person name="Schoenbach C."/>
            <person name="Sekiguchi K."/>
            <person name="Semple C.A."/>
            <person name="Seno S."/>
            <person name="Sessa L."/>
            <person name="Sheng Y."/>
            <person name="Shibata Y."/>
            <person name="Shimada H."/>
            <person name="Shimada K."/>
            <person name="Silva D."/>
            <person name="Sinclair B."/>
            <person name="Sperling S."/>
            <person name="Stupka E."/>
            <person name="Sugiura K."/>
            <person name="Sultana R."/>
            <person name="Takenaka Y."/>
            <person name="Taki K."/>
            <person name="Tammoja K."/>
            <person name="Tan S.L."/>
            <person name="Tang S."/>
            <person name="Taylor M.S."/>
            <person name="Tegner J."/>
            <person name="Teichmann S.A."/>
            <person name="Ueda H.R."/>
            <person name="van Nimwegen E."/>
            <person name="Verardo R."/>
            <person name="Wei C.L."/>
            <person name="Yagi K."/>
            <person name="Yamanishi H."/>
            <person name="Zabarovsky E."/>
            <person name="Zhu S."/>
            <person name="Zimmer A."/>
            <person name="Hide W."/>
            <person name="Bult C."/>
            <person name="Grimmond S.M."/>
            <person name="Teasdale R.D."/>
            <person name="Liu E.T."/>
            <person name="Brusic V."/>
            <person name="Quackenbush J."/>
            <person name="Wahlestedt C."/>
            <person name="Mattick J.S."/>
            <person name="Hume D.A."/>
            <person name="Kai C."/>
            <person name="Sasaki D."/>
            <person name="Tomaru Y."/>
            <person name="Fukuda S."/>
            <person name="Kanamori-Katayama M."/>
            <person name="Suzuki M."/>
            <person name="Aoki J."/>
            <person name="Arakawa T."/>
            <person name="Iida J."/>
            <person name="Imamura K."/>
            <person name="Itoh M."/>
            <person name="Kato T."/>
            <person name="Kawaji H."/>
            <person name="Kawagashira N."/>
            <person name="Kawashima T."/>
            <person name="Kojima M."/>
            <person name="Kondo S."/>
            <person name="Konno H."/>
            <person name="Nakano K."/>
            <person name="Ninomiya N."/>
            <person name="Nishio T."/>
            <person name="Okada M."/>
            <person name="Plessy C."/>
            <person name="Shibata K."/>
            <person name="Shiraki T."/>
            <person name="Suzuki S."/>
            <person name="Tagami M."/>
            <person name="Waki K."/>
            <person name="Watahiki A."/>
            <person name="Okamura-Oho Y."/>
            <person name="Suzuki H."/>
            <person name="Kawai J."/>
            <person name="Hayashizaki Y."/>
        </authorList>
    </citation>
    <scope>NUCLEOTIDE SEQUENCE [LARGE SCALE MRNA]</scope>
    <source>
        <strain>C57BL/6J</strain>
        <strain>NOD</strain>
        <tissue>Mammary gland</tissue>
        <tissue>Spinal cord</tissue>
        <tissue>Spleen</tissue>
    </source>
</reference>
<reference key="3">
    <citation type="submission" date="2005-09" db="EMBL/GenBank/DDBJ databases">
        <authorList>
            <person name="Mural R.J."/>
            <person name="Adams M.D."/>
            <person name="Myers E.W."/>
            <person name="Smith H.O."/>
            <person name="Venter J.C."/>
        </authorList>
    </citation>
    <scope>NUCLEOTIDE SEQUENCE [LARGE SCALE GENOMIC DNA]</scope>
</reference>
<reference key="4">
    <citation type="journal article" date="2004" name="Genome Res.">
        <title>The status, quality, and expansion of the NIH full-length cDNA project: the Mammalian Gene Collection (MGC).</title>
        <authorList>
            <consortium name="The MGC Project Team"/>
        </authorList>
    </citation>
    <scope>NUCLEOTIDE SEQUENCE [LARGE SCALE MRNA]</scope>
    <source>
        <strain>FVB/N</strain>
        <tissue>Kidney</tissue>
    </source>
</reference>
<reference key="5">
    <citation type="journal article" date="2010" name="Cell">
        <title>A tissue-specific atlas of mouse protein phosphorylation and expression.</title>
        <authorList>
            <person name="Huttlin E.L."/>
            <person name="Jedrychowski M.P."/>
            <person name="Elias J.E."/>
            <person name="Goswami T."/>
            <person name="Rad R."/>
            <person name="Beausoleil S.A."/>
            <person name="Villen J."/>
            <person name="Haas W."/>
            <person name="Sowa M.E."/>
            <person name="Gygi S.P."/>
        </authorList>
    </citation>
    <scope>IDENTIFICATION BY MASS SPECTROMETRY [LARGE SCALE ANALYSIS]</scope>
    <source>
        <tissue>Kidney</tissue>
        <tissue>Liver</tissue>
        <tissue>Pancreas</tissue>
    </source>
</reference>
<feature type="chain" id="PRO_0000071038" description="DnaJ homolog subfamily B member 12">
    <location>
        <begin position="1"/>
        <end position="376"/>
    </location>
</feature>
<feature type="transmembrane region" description="Helical" evidence="2">
    <location>
        <begin position="243"/>
        <end position="263"/>
    </location>
</feature>
<feature type="domain" description="J" evidence="3">
    <location>
        <begin position="111"/>
        <end position="175"/>
    </location>
</feature>
<feature type="region of interest" description="Disordered" evidence="4">
    <location>
        <begin position="45"/>
        <end position="97"/>
    </location>
</feature>
<feature type="compositionally biased region" description="Low complexity" evidence="4">
    <location>
        <begin position="57"/>
        <end position="84"/>
    </location>
</feature>
<feature type="modified residue" description="N-acetylmethionine" evidence="1">
    <location>
        <position position="1"/>
    </location>
</feature>
<feature type="modified residue" description="Pros-methylhistidine" evidence="1">
    <location>
        <position position="186"/>
    </location>
</feature>
<feature type="sequence conflict" description="In Ref. 1; BAA88308." evidence="6" ref="1">
    <original>D</original>
    <variation>E</variation>
    <location>
        <position position="321"/>
    </location>
</feature>
<evidence type="ECO:0000250" key="1">
    <source>
        <dbReference type="UniProtKB" id="Q9NXW2"/>
    </source>
</evidence>
<evidence type="ECO:0000255" key="2"/>
<evidence type="ECO:0000255" key="3">
    <source>
        <dbReference type="PROSITE-ProRule" id="PRU00286"/>
    </source>
</evidence>
<evidence type="ECO:0000256" key="4">
    <source>
        <dbReference type="SAM" id="MobiDB-lite"/>
    </source>
</evidence>
<evidence type="ECO:0000303" key="5">
    <source>
    </source>
</evidence>
<evidence type="ECO:0000305" key="6"/>
<evidence type="ECO:0000312" key="7">
    <source>
        <dbReference type="MGI" id="MGI:1931881"/>
    </source>
</evidence>
<sequence length="376" mass="41988">MESNKDEAERCISIALKAIQSNQPERALRFLEKAQRLYPTPRVSALIESLNQKPQSTGDHPQPTDTTHTTTKKAGGTETPSANGEAGGGESAKGYTSEQVAAVKRVKQCKDYYEILGVSRSASDEDLKKAYRKLALKFHPDKNHAPGATEAFKAIGTAYAVLSNPEKRKQYDQFGDDKSQAARHGHSHGDFHRGFEADISPEDLFNMFFGGGFPSSNVHVYSNGRMRYTYQQRQDRRDNQGDGGLGVFVQLMPILILILVSALSQLMVSSPPYSLSPRPSVGHIHKRVTDHLNVAYYVADTFSEEYTGSSLKTVERNVEDDYIANLRNNCWKEKQQKEGLLYRARYFGDTDMYHRAQKMGTPSCNRLSEVQASLHG</sequence>
<accession>Q9QYI4</accession>
<accession>Q8K037</accession>
<proteinExistence type="evidence at protein level"/>
<gene>
    <name evidence="7" type="primary">Dnajb12</name>
</gene>
<name>DJB12_MOUSE</name>
<dbReference type="EMBL" id="AB028860">
    <property type="protein sequence ID" value="BAA88308.1"/>
    <property type="molecule type" value="mRNA"/>
</dbReference>
<dbReference type="EMBL" id="AK138495">
    <property type="protein sequence ID" value="BAE23683.1"/>
    <property type="molecule type" value="mRNA"/>
</dbReference>
<dbReference type="EMBL" id="AK166224">
    <property type="protein sequence ID" value="BAE38642.1"/>
    <property type="molecule type" value="mRNA"/>
</dbReference>
<dbReference type="EMBL" id="AK172274">
    <property type="protein sequence ID" value="BAE42919.1"/>
    <property type="molecule type" value="mRNA"/>
</dbReference>
<dbReference type="EMBL" id="CH466553">
    <property type="protein sequence ID" value="EDL32192.1"/>
    <property type="molecule type" value="Genomic_DNA"/>
</dbReference>
<dbReference type="EMBL" id="CH466553">
    <property type="protein sequence ID" value="EDL32193.1"/>
    <property type="molecule type" value="Genomic_DNA"/>
</dbReference>
<dbReference type="EMBL" id="CH466553">
    <property type="protein sequence ID" value="EDL32195.1"/>
    <property type="molecule type" value="Genomic_DNA"/>
</dbReference>
<dbReference type="EMBL" id="BC034162">
    <property type="protein sequence ID" value="AAH34162.1"/>
    <property type="molecule type" value="mRNA"/>
</dbReference>
<dbReference type="CCDS" id="CCDS23867.1"/>
<dbReference type="RefSeq" id="NP_001363899.1">
    <property type="nucleotide sequence ID" value="NM_001376970.1"/>
</dbReference>
<dbReference type="RefSeq" id="NP_064349.2">
    <property type="nucleotide sequence ID" value="NM_019965.2"/>
</dbReference>
<dbReference type="SMR" id="Q9QYI4"/>
<dbReference type="BioGRID" id="208137">
    <property type="interactions" value="8"/>
</dbReference>
<dbReference type="FunCoup" id="Q9QYI4">
    <property type="interactions" value="2866"/>
</dbReference>
<dbReference type="IntAct" id="Q9QYI4">
    <property type="interactions" value="1"/>
</dbReference>
<dbReference type="STRING" id="10090.ENSMUSP00000122056"/>
<dbReference type="iPTMnet" id="Q9QYI4"/>
<dbReference type="PhosphoSitePlus" id="Q9QYI4"/>
<dbReference type="jPOST" id="Q9QYI4"/>
<dbReference type="PaxDb" id="10090-ENSMUSP00000122056"/>
<dbReference type="PeptideAtlas" id="Q9QYI4"/>
<dbReference type="ProteomicsDB" id="277458"/>
<dbReference type="Pumba" id="Q9QYI4"/>
<dbReference type="Antibodypedia" id="2545">
    <property type="antibodies" value="176 antibodies from 25 providers"/>
</dbReference>
<dbReference type="DNASU" id="56709"/>
<dbReference type="Ensembl" id="ENSMUST00000020309.7">
    <property type="protein sequence ID" value="ENSMUSP00000020309.7"/>
    <property type="gene ID" value="ENSMUSG00000020109.14"/>
</dbReference>
<dbReference type="Ensembl" id="ENSMUST00000142819.8">
    <property type="protein sequence ID" value="ENSMUSP00000118088.2"/>
    <property type="gene ID" value="ENSMUSG00000020109.14"/>
</dbReference>
<dbReference type="Ensembl" id="ENSMUST00000146590.8">
    <property type="protein sequence ID" value="ENSMUSP00000122056.2"/>
    <property type="gene ID" value="ENSMUSG00000020109.14"/>
</dbReference>
<dbReference type="GeneID" id="56709"/>
<dbReference type="KEGG" id="mmu:56709"/>
<dbReference type="UCSC" id="uc007fdz.1">
    <property type="organism name" value="mouse"/>
</dbReference>
<dbReference type="AGR" id="MGI:1931881"/>
<dbReference type="CTD" id="54788"/>
<dbReference type="MGI" id="MGI:1931881">
    <property type="gene designation" value="Dnajb12"/>
</dbReference>
<dbReference type="VEuPathDB" id="HostDB:ENSMUSG00000020109"/>
<dbReference type="eggNOG" id="KOG0714">
    <property type="taxonomic scope" value="Eukaryota"/>
</dbReference>
<dbReference type="GeneTree" id="ENSGT00940000155590"/>
<dbReference type="HOGENOM" id="CLU_043579_3_0_1"/>
<dbReference type="InParanoid" id="Q9QYI4"/>
<dbReference type="OrthoDB" id="442087at2759"/>
<dbReference type="PhylomeDB" id="Q9QYI4"/>
<dbReference type="TreeFam" id="TF105145"/>
<dbReference type="BioGRID-ORCS" id="56709">
    <property type="hits" value="3 hits in 78 CRISPR screens"/>
</dbReference>
<dbReference type="CD-CODE" id="CE726F99">
    <property type="entry name" value="Postsynaptic density"/>
</dbReference>
<dbReference type="ChiTaRS" id="Dnajb12">
    <property type="organism name" value="mouse"/>
</dbReference>
<dbReference type="PRO" id="PR:Q9QYI4"/>
<dbReference type="Proteomes" id="UP000000589">
    <property type="component" value="Chromosome 10"/>
</dbReference>
<dbReference type="RNAct" id="Q9QYI4">
    <property type="molecule type" value="protein"/>
</dbReference>
<dbReference type="Bgee" id="ENSMUSG00000020109">
    <property type="expression patterns" value="Expressed in hindlimb stylopod muscle and 237 other cell types or tissues"/>
</dbReference>
<dbReference type="ExpressionAtlas" id="Q9QYI4">
    <property type="expression patterns" value="baseline and differential"/>
</dbReference>
<dbReference type="GO" id="GO:0005783">
    <property type="term" value="C:endoplasmic reticulum"/>
    <property type="evidence" value="ECO:0000250"/>
    <property type="project" value="UniProtKB"/>
</dbReference>
<dbReference type="GO" id="GO:0005789">
    <property type="term" value="C:endoplasmic reticulum membrane"/>
    <property type="evidence" value="ECO:0000250"/>
    <property type="project" value="UniProtKB"/>
</dbReference>
<dbReference type="GO" id="GO:0031965">
    <property type="term" value="C:nuclear membrane"/>
    <property type="evidence" value="ECO:0007669"/>
    <property type="project" value="UniProtKB-SubCell"/>
</dbReference>
<dbReference type="GO" id="GO:0071218">
    <property type="term" value="P:cellular response to misfolded protein"/>
    <property type="evidence" value="ECO:0000250"/>
    <property type="project" value="UniProtKB"/>
</dbReference>
<dbReference type="GO" id="GO:0051085">
    <property type="term" value="P:chaperone cofactor-dependent protein refolding"/>
    <property type="evidence" value="ECO:0000250"/>
    <property type="project" value="UniProtKB"/>
</dbReference>
<dbReference type="GO" id="GO:0036503">
    <property type="term" value="P:ERAD pathway"/>
    <property type="evidence" value="ECO:0000250"/>
    <property type="project" value="UniProtKB"/>
</dbReference>
<dbReference type="GO" id="GO:0065003">
    <property type="term" value="P:protein-containing complex assembly"/>
    <property type="evidence" value="ECO:0000250"/>
    <property type="project" value="UniProtKB"/>
</dbReference>
<dbReference type="CDD" id="cd06257">
    <property type="entry name" value="DnaJ"/>
    <property type="match status" value="1"/>
</dbReference>
<dbReference type="FunFam" id="1.10.287.110:FF:000004">
    <property type="entry name" value="DnaJ (Hsp40) homolog, subfamily B, member 14"/>
    <property type="match status" value="1"/>
</dbReference>
<dbReference type="Gene3D" id="1.10.287.110">
    <property type="entry name" value="DnaJ domain"/>
    <property type="match status" value="1"/>
</dbReference>
<dbReference type="InterPro" id="IPR001623">
    <property type="entry name" value="DnaJ_domain"/>
</dbReference>
<dbReference type="InterPro" id="IPR018253">
    <property type="entry name" value="DnaJ_domain_CS"/>
</dbReference>
<dbReference type="InterPro" id="IPR051100">
    <property type="entry name" value="DnaJ_subfamily_B/C"/>
</dbReference>
<dbReference type="InterPro" id="IPR015399">
    <property type="entry name" value="DUF1977_DnaJ-like"/>
</dbReference>
<dbReference type="InterPro" id="IPR036869">
    <property type="entry name" value="J_dom_sf"/>
</dbReference>
<dbReference type="PANTHER" id="PTHR43908">
    <property type="entry name" value="AT29763P-RELATED"/>
    <property type="match status" value="1"/>
</dbReference>
<dbReference type="PANTHER" id="PTHR43908:SF8">
    <property type="entry name" value="DNAJ HOMOLOG SUBFAMILY B MEMBER 12"/>
    <property type="match status" value="1"/>
</dbReference>
<dbReference type="Pfam" id="PF00226">
    <property type="entry name" value="DnaJ"/>
    <property type="match status" value="1"/>
</dbReference>
<dbReference type="Pfam" id="PF09320">
    <property type="entry name" value="DUF1977"/>
    <property type="match status" value="1"/>
</dbReference>
<dbReference type="PRINTS" id="PR00625">
    <property type="entry name" value="JDOMAIN"/>
</dbReference>
<dbReference type="SMART" id="SM00271">
    <property type="entry name" value="DnaJ"/>
    <property type="match status" value="1"/>
</dbReference>
<dbReference type="SUPFAM" id="SSF46565">
    <property type="entry name" value="Chaperone J-domain"/>
    <property type="match status" value="1"/>
</dbReference>
<dbReference type="PROSITE" id="PS00636">
    <property type="entry name" value="DNAJ_1"/>
    <property type="match status" value="1"/>
</dbReference>
<dbReference type="PROSITE" id="PS50076">
    <property type="entry name" value="DNAJ_2"/>
    <property type="match status" value="1"/>
</dbReference>
<organism>
    <name type="scientific">Mus musculus</name>
    <name type="common">Mouse</name>
    <dbReference type="NCBI Taxonomy" id="10090"/>
    <lineage>
        <taxon>Eukaryota</taxon>
        <taxon>Metazoa</taxon>
        <taxon>Chordata</taxon>
        <taxon>Craniata</taxon>
        <taxon>Vertebrata</taxon>
        <taxon>Euteleostomi</taxon>
        <taxon>Mammalia</taxon>
        <taxon>Eutheria</taxon>
        <taxon>Euarchontoglires</taxon>
        <taxon>Glires</taxon>
        <taxon>Rodentia</taxon>
        <taxon>Myomorpha</taxon>
        <taxon>Muroidea</taxon>
        <taxon>Muridae</taxon>
        <taxon>Murinae</taxon>
        <taxon>Mus</taxon>
        <taxon>Mus</taxon>
    </lineage>
</organism>